<feature type="chain" id="PRO_1000079337" description="Large ribosomal subunit protein bL32">
    <location>
        <begin position="1"/>
        <end position="59"/>
    </location>
</feature>
<feature type="region of interest" description="Disordered" evidence="2">
    <location>
        <begin position="35"/>
        <end position="59"/>
    </location>
</feature>
<feature type="compositionally biased region" description="Basic residues" evidence="2">
    <location>
        <begin position="49"/>
        <end position="59"/>
    </location>
</feature>
<reference key="1">
    <citation type="journal article" date="2012" name="Stand. Genomic Sci.">
        <title>Complete genome sequence of Polynucleobacter necessarius subsp. asymbioticus type strain (QLW-P1DMWA-1(T)).</title>
        <authorList>
            <person name="Meincke L."/>
            <person name="Copeland A."/>
            <person name="Lapidus A."/>
            <person name="Lucas S."/>
            <person name="Berry K.W."/>
            <person name="Del Rio T.G."/>
            <person name="Hammon N."/>
            <person name="Dalin E."/>
            <person name="Tice H."/>
            <person name="Pitluck S."/>
            <person name="Richardson P."/>
            <person name="Bruce D."/>
            <person name="Goodwin L."/>
            <person name="Han C."/>
            <person name="Tapia R."/>
            <person name="Detter J.C."/>
            <person name="Schmutz J."/>
            <person name="Brettin T."/>
            <person name="Larimer F."/>
            <person name="Land M."/>
            <person name="Hauser L."/>
            <person name="Kyrpides N.C."/>
            <person name="Ivanova N."/>
            <person name="Goker M."/>
            <person name="Woyke T."/>
            <person name="Wu Q.L."/>
            <person name="Pockl M."/>
            <person name="Hahn M.W."/>
            <person name="Klenk H.P."/>
        </authorList>
    </citation>
    <scope>NUCLEOTIDE SEQUENCE [LARGE SCALE GENOMIC DNA]</scope>
    <source>
        <strain>DSM 18221 / CIP 109841 / QLW-P1DMWA-1</strain>
    </source>
</reference>
<proteinExistence type="inferred from homology"/>
<name>RL32_POLAQ</name>
<accession>A4SVV2</accession>
<sequence length="59" mass="6596">MAVQQNKKSPSKRGMHRAHDFLTAPATAVEATTGEAHLRHHISPNGYYRGRKVVKTKND</sequence>
<protein>
    <recommendedName>
        <fullName evidence="1">Large ribosomal subunit protein bL32</fullName>
    </recommendedName>
    <alternativeName>
        <fullName evidence="3">50S ribosomal protein L32</fullName>
    </alternativeName>
</protein>
<evidence type="ECO:0000255" key="1">
    <source>
        <dbReference type="HAMAP-Rule" id="MF_00340"/>
    </source>
</evidence>
<evidence type="ECO:0000256" key="2">
    <source>
        <dbReference type="SAM" id="MobiDB-lite"/>
    </source>
</evidence>
<evidence type="ECO:0000305" key="3"/>
<gene>
    <name evidence="1" type="primary">rpmF</name>
    <name type="ordered locus">Pnuc_0396</name>
</gene>
<keyword id="KW-1185">Reference proteome</keyword>
<keyword id="KW-0687">Ribonucleoprotein</keyword>
<keyword id="KW-0689">Ribosomal protein</keyword>
<organism>
    <name type="scientific">Polynucleobacter asymbioticus (strain DSM 18221 / CIP 109841 / QLW-P1DMWA-1)</name>
    <name type="common">Polynucleobacter necessarius subsp. asymbioticus</name>
    <dbReference type="NCBI Taxonomy" id="312153"/>
    <lineage>
        <taxon>Bacteria</taxon>
        <taxon>Pseudomonadati</taxon>
        <taxon>Pseudomonadota</taxon>
        <taxon>Betaproteobacteria</taxon>
        <taxon>Burkholderiales</taxon>
        <taxon>Burkholderiaceae</taxon>
        <taxon>Polynucleobacter</taxon>
    </lineage>
</organism>
<dbReference type="EMBL" id="CP000655">
    <property type="protein sequence ID" value="ABP33616.1"/>
    <property type="molecule type" value="Genomic_DNA"/>
</dbReference>
<dbReference type="RefSeq" id="WP_011902241.1">
    <property type="nucleotide sequence ID" value="NC_009379.1"/>
</dbReference>
<dbReference type="SMR" id="A4SVV2"/>
<dbReference type="GeneID" id="31480747"/>
<dbReference type="KEGG" id="pnu:Pnuc_0396"/>
<dbReference type="eggNOG" id="COG0333">
    <property type="taxonomic scope" value="Bacteria"/>
</dbReference>
<dbReference type="HOGENOM" id="CLU_129084_2_1_4"/>
<dbReference type="Proteomes" id="UP000000231">
    <property type="component" value="Chromosome"/>
</dbReference>
<dbReference type="GO" id="GO:0015934">
    <property type="term" value="C:large ribosomal subunit"/>
    <property type="evidence" value="ECO:0007669"/>
    <property type="project" value="InterPro"/>
</dbReference>
<dbReference type="GO" id="GO:0003735">
    <property type="term" value="F:structural constituent of ribosome"/>
    <property type="evidence" value="ECO:0007669"/>
    <property type="project" value="InterPro"/>
</dbReference>
<dbReference type="GO" id="GO:0006412">
    <property type="term" value="P:translation"/>
    <property type="evidence" value="ECO:0007669"/>
    <property type="project" value="UniProtKB-UniRule"/>
</dbReference>
<dbReference type="HAMAP" id="MF_00340">
    <property type="entry name" value="Ribosomal_bL32"/>
    <property type="match status" value="1"/>
</dbReference>
<dbReference type="InterPro" id="IPR002677">
    <property type="entry name" value="Ribosomal_bL32"/>
</dbReference>
<dbReference type="InterPro" id="IPR044957">
    <property type="entry name" value="Ribosomal_bL32_bact"/>
</dbReference>
<dbReference type="InterPro" id="IPR011332">
    <property type="entry name" value="Ribosomal_zn-bd"/>
</dbReference>
<dbReference type="NCBIfam" id="TIGR01031">
    <property type="entry name" value="rpmF_bact"/>
    <property type="match status" value="1"/>
</dbReference>
<dbReference type="PANTHER" id="PTHR35534">
    <property type="entry name" value="50S RIBOSOMAL PROTEIN L32"/>
    <property type="match status" value="1"/>
</dbReference>
<dbReference type="PANTHER" id="PTHR35534:SF1">
    <property type="entry name" value="LARGE RIBOSOMAL SUBUNIT PROTEIN BL32"/>
    <property type="match status" value="1"/>
</dbReference>
<dbReference type="Pfam" id="PF01783">
    <property type="entry name" value="Ribosomal_L32p"/>
    <property type="match status" value="1"/>
</dbReference>
<dbReference type="SUPFAM" id="SSF57829">
    <property type="entry name" value="Zn-binding ribosomal proteins"/>
    <property type="match status" value="1"/>
</dbReference>
<comment type="similarity">
    <text evidence="1">Belongs to the bacterial ribosomal protein bL32 family.</text>
</comment>